<sequence length="412" mass="46091">MTEADGLRQRRPLRPQVVTDDNRTPEAKGGSSFSGRVFRATFLMLAAFLTIPLLGALVLLDSPIDPEPLSFKEPPLFLGVLQPNTKLQQAERLFENQLVGPESIANIGDVMFTGTADGRVVKLENGEVETIARFGSGPCKTRDDEPACGRPLGIRAGPNGTLFVVDAYKGLFEVNPWKREVKLLLSSETPIEGRKMSFLNDLTVTRDGRKIYFTDSSSKWQRRDYLLLLMEGTDDGRLLEYDTQTKEVKVLLDHLRFPNGVQLSPAEDFVLVVELAMVRIRRFYVSGLMKGGADVFVENLPGFPDNIRASSSGGYWVSMAAIRANPGFSMLDFLSERPFLKKVIFKLFSQETVMKFVPRYSLVLELSDSGTFLRSLHDPEGQVVTYVSEAHEHSGHLYLGSFRAPYLCRLRL</sequence>
<reference key="1">
    <citation type="submission" date="2005-08" db="EMBL/GenBank/DDBJ databases">
        <authorList>
            <consortium name="NIH - Mammalian Gene Collection (MGC) project"/>
        </authorList>
    </citation>
    <scope>NUCLEOTIDE SEQUENCE [LARGE SCALE MRNA]</scope>
    <source>
        <strain>Crossbred X Angus</strain>
        <tissue>Ileum</tissue>
    </source>
</reference>
<evidence type="ECO:0000250" key="1"/>
<evidence type="ECO:0000250" key="2">
    <source>
        <dbReference type="UniProtKB" id="Q9HDC9"/>
    </source>
</evidence>
<evidence type="ECO:0000255" key="3"/>
<evidence type="ECO:0000256" key="4">
    <source>
        <dbReference type="SAM" id="MobiDB-lite"/>
    </source>
</evidence>
<evidence type="ECO:0000305" key="5"/>
<dbReference type="EMBL" id="BC102429">
    <property type="protein sequence ID" value="AAI02430.1"/>
    <property type="molecule type" value="mRNA"/>
</dbReference>
<dbReference type="RefSeq" id="NP_001030490.1">
    <property type="nucleotide sequence ID" value="NM_001035413.2"/>
</dbReference>
<dbReference type="SMR" id="Q3T0E5"/>
<dbReference type="FunCoup" id="Q3T0E5">
    <property type="interactions" value="1777"/>
</dbReference>
<dbReference type="STRING" id="9913.ENSBTAP00000005603"/>
<dbReference type="GlyCosmos" id="Q3T0E5">
    <property type="glycosylation" value="1 site, No reported glycans"/>
</dbReference>
<dbReference type="GlyGen" id="Q3T0E5">
    <property type="glycosylation" value="1 site"/>
</dbReference>
<dbReference type="SwissPalm" id="Q3T0E5"/>
<dbReference type="PaxDb" id="9913-ENSBTAP00000005603"/>
<dbReference type="GeneID" id="535740"/>
<dbReference type="KEGG" id="bta:535740"/>
<dbReference type="CTD" id="57136"/>
<dbReference type="eggNOG" id="KOG1520">
    <property type="taxonomic scope" value="Eukaryota"/>
</dbReference>
<dbReference type="HOGENOM" id="CLU_023267_0_0_1"/>
<dbReference type="InParanoid" id="Q3T0E5"/>
<dbReference type="OrthoDB" id="5307922at2759"/>
<dbReference type="TreeFam" id="TF316475"/>
<dbReference type="Proteomes" id="UP000009136">
    <property type="component" value="Unplaced"/>
</dbReference>
<dbReference type="GO" id="GO:0016020">
    <property type="term" value="C:membrane"/>
    <property type="evidence" value="ECO:0007669"/>
    <property type="project" value="UniProtKB-SubCell"/>
</dbReference>
<dbReference type="GO" id="GO:0004064">
    <property type="term" value="F:arylesterase activity"/>
    <property type="evidence" value="ECO:0000318"/>
    <property type="project" value="GO_Central"/>
</dbReference>
<dbReference type="FunFam" id="2.120.10.30:FF:000041">
    <property type="entry name" value="adipocyte plasma membrane-associated protein"/>
    <property type="match status" value="1"/>
</dbReference>
<dbReference type="Gene3D" id="2.120.10.30">
    <property type="entry name" value="TolB, C-terminal domain"/>
    <property type="match status" value="1"/>
</dbReference>
<dbReference type="InterPro" id="IPR011042">
    <property type="entry name" value="6-blade_b-propeller_TolB-like"/>
</dbReference>
<dbReference type="InterPro" id="IPR018119">
    <property type="entry name" value="Strictosidine_synth_cons-reg"/>
</dbReference>
<dbReference type="PANTHER" id="PTHR10426:SF130">
    <property type="entry name" value="ADIPOCYTE PLASMA MEMBRANE-ASSOCIATED PROTEIN"/>
    <property type="match status" value="1"/>
</dbReference>
<dbReference type="PANTHER" id="PTHR10426">
    <property type="entry name" value="STRICTOSIDINE SYNTHASE-RELATED"/>
    <property type="match status" value="1"/>
</dbReference>
<dbReference type="Pfam" id="PF20067">
    <property type="entry name" value="SSL_N"/>
    <property type="match status" value="1"/>
</dbReference>
<dbReference type="Pfam" id="PF03088">
    <property type="entry name" value="Str_synth"/>
    <property type="match status" value="1"/>
</dbReference>
<dbReference type="SUPFAM" id="SSF63829">
    <property type="entry name" value="Calcium-dependent phosphotriesterase"/>
    <property type="match status" value="1"/>
</dbReference>
<name>APMAP_BOVIN</name>
<comment type="function">
    <text evidence="1">Exhibits strong arylesterase activity with beta-naphthyl acetate and phenyl acetate. May play a role in adipocyte differentiation (By similarity).</text>
</comment>
<comment type="subcellular location">
    <subcellularLocation>
        <location evidence="1">Membrane</location>
        <topology evidence="1">Single-pass type II membrane protein</topology>
    </subcellularLocation>
</comment>
<comment type="similarity">
    <text evidence="5">Belongs to the strictosidine synthase family.</text>
</comment>
<proteinExistence type="evidence at transcript level"/>
<protein>
    <recommendedName>
        <fullName>Adipocyte plasma membrane-associated protein</fullName>
    </recommendedName>
</protein>
<organism>
    <name type="scientific">Bos taurus</name>
    <name type="common">Bovine</name>
    <dbReference type="NCBI Taxonomy" id="9913"/>
    <lineage>
        <taxon>Eukaryota</taxon>
        <taxon>Metazoa</taxon>
        <taxon>Chordata</taxon>
        <taxon>Craniata</taxon>
        <taxon>Vertebrata</taxon>
        <taxon>Euteleostomi</taxon>
        <taxon>Mammalia</taxon>
        <taxon>Eutheria</taxon>
        <taxon>Laurasiatheria</taxon>
        <taxon>Artiodactyla</taxon>
        <taxon>Ruminantia</taxon>
        <taxon>Pecora</taxon>
        <taxon>Bovidae</taxon>
        <taxon>Bovinae</taxon>
        <taxon>Bos</taxon>
    </lineage>
</organism>
<feature type="chain" id="PRO_0000370857" description="Adipocyte plasma membrane-associated protein">
    <location>
        <begin position="1"/>
        <end position="412"/>
    </location>
</feature>
<feature type="topological domain" description="Cytoplasmic" evidence="3">
    <location>
        <begin position="1"/>
        <end position="39"/>
    </location>
</feature>
<feature type="transmembrane region" description="Helical" evidence="3">
    <location>
        <begin position="40"/>
        <end position="60"/>
    </location>
</feature>
<feature type="topological domain" description="Extracellular" evidence="3">
    <location>
        <begin position="61"/>
        <end position="412"/>
    </location>
</feature>
<feature type="region of interest" description="Disordered" evidence="4">
    <location>
        <begin position="1"/>
        <end position="32"/>
    </location>
</feature>
<feature type="modified residue" description="Phosphothreonine" evidence="2">
    <location>
        <position position="19"/>
    </location>
</feature>
<feature type="glycosylation site" description="N-linked (GlcNAc...) asparagine" evidence="3">
    <location>
        <position position="159"/>
    </location>
</feature>
<accession>Q3T0E5</accession>
<gene>
    <name type="primary">APMAP</name>
</gene>
<keyword id="KW-0325">Glycoprotein</keyword>
<keyword id="KW-0472">Membrane</keyword>
<keyword id="KW-0597">Phosphoprotein</keyword>
<keyword id="KW-1185">Reference proteome</keyword>
<keyword id="KW-0735">Signal-anchor</keyword>
<keyword id="KW-0812">Transmembrane</keyword>
<keyword id="KW-1133">Transmembrane helix</keyword>